<proteinExistence type="inferred from homology"/>
<evidence type="ECO:0000255" key="1">
    <source>
        <dbReference type="HAMAP-Rule" id="MF_01007"/>
    </source>
</evidence>
<name>RSMH_EHRRG</name>
<organism>
    <name type="scientific">Ehrlichia ruminantium (strain Gardel)</name>
    <dbReference type="NCBI Taxonomy" id="302409"/>
    <lineage>
        <taxon>Bacteria</taxon>
        <taxon>Pseudomonadati</taxon>
        <taxon>Pseudomonadota</taxon>
        <taxon>Alphaproteobacteria</taxon>
        <taxon>Rickettsiales</taxon>
        <taxon>Anaplasmataceae</taxon>
        <taxon>Ehrlichia</taxon>
    </lineage>
</organism>
<keyword id="KW-0963">Cytoplasm</keyword>
<keyword id="KW-0489">Methyltransferase</keyword>
<keyword id="KW-0698">rRNA processing</keyword>
<keyword id="KW-0949">S-adenosyl-L-methionine</keyword>
<keyword id="KW-0808">Transferase</keyword>
<comment type="function">
    <text evidence="1">Specifically methylates the N4 position of cytidine in position 1402 (C1402) of 16S rRNA.</text>
</comment>
<comment type="catalytic activity">
    <reaction evidence="1">
        <text>cytidine(1402) in 16S rRNA + S-adenosyl-L-methionine = N(4)-methylcytidine(1402) in 16S rRNA + S-adenosyl-L-homocysteine + H(+)</text>
        <dbReference type="Rhea" id="RHEA:42928"/>
        <dbReference type="Rhea" id="RHEA-COMP:10286"/>
        <dbReference type="Rhea" id="RHEA-COMP:10287"/>
        <dbReference type="ChEBI" id="CHEBI:15378"/>
        <dbReference type="ChEBI" id="CHEBI:57856"/>
        <dbReference type="ChEBI" id="CHEBI:59789"/>
        <dbReference type="ChEBI" id="CHEBI:74506"/>
        <dbReference type="ChEBI" id="CHEBI:82748"/>
        <dbReference type="EC" id="2.1.1.199"/>
    </reaction>
</comment>
<comment type="subcellular location">
    <subcellularLocation>
        <location evidence="1">Cytoplasm</location>
    </subcellularLocation>
</comment>
<comment type="similarity">
    <text evidence="1">Belongs to the methyltransferase superfamily. RsmH family.</text>
</comment>
<feature type="chain" id="PRO_0000108623" description="Ribosomal RNA small subunit methyltransferase H">
    <location>
        <begin position="1"/>
        <end position="301"/>
    </location>
</feature>
<feature type="binding site" evidence="1">
    <location>
        <begin position="31"/>
        <end position="33"/>
    </location>
    <ligand>
        <name>S-adenosyl-L-methionine</name>
        <dbReference type="ChEBI" id="CHEBI:59789"/>
    </ligand>
</feature>
<feature type="binding site" evidence="1">
    <location>
        <position position="49"/>
    </location>
    <ligand>
        <name>S-adenosyl-L-methionine</name>
        <dbReference type="ChEBI" id="CHEBI:59789"/>
    </ligand>
</feature>
<feature type="binding site" evidence="1">
    <location>
        <position position="76"/>
    </location>
    <ligand>
        <name>S-adenosyl-L-methionine</name>
        <dbReference type="ChEBI" id="CHEBI:59789"/>
    </ligand>
</feature>
<feature type="binding site" evidence="1">
    <location>
        <position position="97"/>
    </location>
    <ligand>
        <name>S-adenosyl-L-methionine</name>
        <dbReference type="ChEBI" id="CHEBI:59789"/>
    </ligand>
</feature>
<feature type="binding site" evidence="1">
    <location>
        <position position="104"/>
    </location>
    <ligand>
        <name>S-adenosyl-L-methionine</name>
        <dbReference type="ChEBI" id="CHEBI:59789"/>
    </ligand>
</feature>
<dbReference type="EC" id="2.1.1.199" evidence="1"/>
<dbReference type="EMBL" id="CR925677">
    <property type="protein sequence ID" value="CAI27950.1"/>
    <property type="molecule type" value="Genomic_DNA"/>
</dbReference>
<dbReference type="RefSeq" id="WP_011255617.1">
    <property type="nucleotide sequence ID" value="NC_006831.1"/>
</dbReference>
<dbReference type="SMR" id="Q5FH93"/>
<dbReference type="KEGG" id="erg:ERGA_CDS_04980"/>
<dbReference type="HOGENOM" id="CLU_038422_1_1_5"/>
<dbReference type="OrthoDB" id="9806637at2"/>
<dbReference type="Proteomes" id="UP000000533">
    <property type="component" value="Chromosome"/>
</dbReference>
<dbReference type="GO" id="GO:0005737">
    <property type="term" value="C:cytoplasm"/>
    <property type="evidence" value="ECO:0007669"/>
    <property type="project" value="UniProtKB-SubCell"/>
</dbReference>
<dbReference type="GO" id="GO:0071424">
    <property type="term" value="F:rRNA (cytosine-N4-)-methyltransferase activity"/>
    <property type="evidence" value="ECO:0007669"/>
    <property type="project" value="UniProtKB-UniRule"/>
</dbReference>
<dbReference type="GO" id="GO:0070475">
    <property type="term" value="P:rRNA base methylation"/>
    <property type="evidence" value="ECO:0007669"/>
    <property type="project" value="UniProtKB-UniRule"/>
</dbReference>
<dbReference type="CDD" id="cd02440">
    <property type="entry name" value="AdoMet_MTases"/>
    <property type="match status" value="1"/>
</dbReference>
<dbReference type="Gene3D" id="1.10.150.170">
    <property type="entry name" value="Putative methyltransferase TM0872, insert domain"/>
    <property type="match status" value="1"/>
</dbReference>
<dbReference type="Gene3D" id="3.40.50.150">
    <property type="entry name" value="Vaccinia Virus protein VP39"/>
    <property type="match status" value="1"/>
</dbReference>
<dbReference type="HAMAP" id="MF_01007">
    <property type="entry name" value="16SrRNA_methyltr_H"/>
    <property type="match status" value="1"/>
</dbReference>
<dbReference type="InterPro" id="IPR002903">
    <property type="entry name" value="RsmH"/>
</dbReference>
<dbReference type="InterPro" id="IPR023397">
    <property type="entry name" value="SAM-dep_MeTrfase_MraW_recog"/>
</dbReference>
<dbReference type="InterPro" id="IPR029063">
    <property type="entry name" value="SAM-dependent_MTases_sf"/>
</dbReference>
<dbReference type="NCBIfam" id="TIGR00006">
    <property type="entry name" value="16S rRNA (cytosine(1402)-N(4))-methyltransferase RsmH"/>
    <property type="match status" value="1"/>
</dbReference>
<dbReference type="PANTHER" id="PTHR11265:SF0">
    <property type="entry name" value="12S RRNA N4-METHYLCYTIDINE METHYLTRANSFERASE"/>
    <property type="match status" value="1"/>
</dbReference>
<dbReference type="PANTHER" id="PTHR11265">
    <property type="entry name" value="S-ADENOSYL-METHYLTRANSFERASE MRAW"/>
    <property type="match status" value="1"/>
</dbReference>
<dbReference type="Pfam" id="PF01795">
    <property type="entry name" value="Methyltransf_5"/>
    <property type="match status" value="1"/>
</dbReference>
<dbReference type="PIRSF" id="PIRSF004486">
    <property type="entry name" value="MraW"/>
    <property type="match status" value="1"/>
</dbReference>
<dbReference type="SUPFAM" id="SSF81799">
    <property type="entry name" value="Putative methyltransferase TM0872, insert domain"/>
    <property type="match status" value="1"/>
</dbReference>
<dbReference type="SUPFAM" id="SSF53335">
    <property type="entry name" value="S-adenosyl-L-methionine-dependent methyltransferases"/>
    <property type="match status" value="1"/>
</dbReference>
<gene>
    <name evidence="1" type="primary">rsmH</name>
    <name type="synonym">mraW</name>
    <name type="ordered locus">ERGA_CDS_04980</name>
</gene>
<sequence>MYHTPVLLKEMLDILSPQNGGIYVDATFGSGGYSRAILNSADCQVYAIDQDEYTYTFYEKLSHDFPNRIHFFINKFSKIQQILNNVQIKKVDGVVFDIGVSSMQLEDASRGFSFSKNGPLDMRMSTSLSGVDARMFVNTVSEVEIANVIYQYGGEKYSRKIARAIVNARNKNMINTTGELASIIRSVVSRSKNHSIDPATRTFQAIRIWVNKELEELEKGIACAANILNQGGKIIVISFHSLEDRIVKVMFKLLCDGKSVNLLNLGLGFQLINKKIIRPTAEEIHSNPRARSAKLRAILKL</sequence>
<accession>Q5FH93</accession>
<reference key="1">
    <citation type="journal article" date="2006" name="J. Bacteriol.">
        <title>Comparative genomic analysis of three strains of Ehrlichia ruminantium reveals an active process of genome size plasticity.</title>
        <authorList>
            <person name="Frutos R."/>
            <person name="Viari A."/>
            <person name="Ferraz C."/>
            <person name="Morgat A."/>
            <person name="Eychenie S."/>
            <person name="Kandassamy Y."/>
            <person name="Chantal I."/>
            <person name="Bensaid A."/>
            <person name="Coissac E."/>
            <person name="Vachiery N."/>
            <person name="Demaille J."/>
            <person name="Martinez D."/>
        </authorList>
    </citation>
    <scope>NUCLEOTIDE SEQUENCE [LARGE SCALE GENOMIC DNA]</scope>
    <source>
        <strain>Gardel</strain>
    </source>
</reference>
<protein>
    <recommendedName>
        <fullName evidence="1">Ribosomal RNA small subunit methyltransferase H</fullName>
        <ecNumber evidence="1">2.1.1.199</ecNumber>
    </recommendedName>
    <alternativeName>
        <fullName evidence="1">16S rRNA m(4)C1402 methyltransferase</fullName>
    </alternativeName>
    <alternativeName>
        <fullName evidence="1">rRNA (cytosine-N(4)-)-methyltransferase RsmH</fullName>
    </alternativeName>
</protein>